<reference key="1">
    <citation type="journal article" date="2001" name="J. Biomed. Sci.">
        <title>The role of RsmA in the regulation of swarming motility in Serratia marcescens.</title>
        <authorList>
            <person name="Ang S."/>
            <person name="Horng Y.-T."/>
            <person name="Shu J.-C."/>
            <person name="Soo P.-C."/>
            <person name="Liu J.-H."/>
            <person name="Yi W.-C."/>
            <person name="Lai H.-C."/>
            <person name="Luh K.-T."/>
            <person name="Ho S.-W."/>
            <person name="Swift S."/>
        </authorList>
    </citation>
    <scope>NUCLEOTIDE SEQUENCE [GENOMIC DNA]</scope>
    <scope>FUNCTION</scope>
    <scope>INDUCTION</scope>
    <scope>DISRUPTION PHENOTYPE</scope>
    <source>
        <strain>CH1</strain>
        <strain>SS-1</strain>
    </source>
</reference>
<name>CSRA_SERMA</name>
<organism>
    <name type="scientific">Serratia marcescens</name>
    <dbReference type="NCBI Taxonomy" id="615"/>
    <lineage>
        <taxon>Bacteria</taxon>
        <taxon>Pseudomonadati</taxon>
        <taxon>Pseudomonadota</taxon>
        <taxon>Gammaproteobacteria</taxon>
        <taxon>Enterobacterales</taxon>
        <taxon>Yersiniaceae</taxon>
        <taxon>Serratia</taxon>
    </lineage>
</organism>
<proteinExistence type="evidence at transcript level"/>
<gene>
    <name evidence="1" type="primary">csrA</name>
    <name evidence="3" type="synonym">rsmA</name>
</gene>
<dbReference type="EMBL" id="AF074437">
    <property type="protein sequence ID" value="AAC25783.1"/>
    <property type="molecule type" value="Genomic_DNA"/>
</dbReference>
<dbReference type="EMBL" id="AJ243121">
    <property type="protein sequence ID" value="CAB45388.1"/>
    <property type="molecule type" value="Genomic_DNA"/>
</dbReference>
<dbReference type="SMR" id="O85735"/>
<dbReference type="STRING" id="273526.SMDB11_0161"/>
<dbReference type="GO" id="GO:0005829">
    <property type="term" value="C:cytosol"/>
    <property type="evidence" value="ECO:0007669"/>
    <property type="project" value="TreeGrafter"/>
</dbReference>
<dbReference type="GO" id="GO:0048027">
    <property type="term" value="F:mRNA 5'-UTR binding"/>
    <property type="evidence" value="ECO:0007669"/>
    <property type="project" value="UniProtKB-UniRule"/>
</dbReference>
<dbReference type="GO" id="GO:0006402">
    <property type="term" value="P:mRNA catabolic process"/>
    <property type="evidence" value="ECO:0007669"/>
    <property type="project" value="InterPro"/>
</dbReference>
<dbReference type="GO" id="GO:0045947">
    <property type="term" value="P:negative regulation of translational initiation"/>
    <property type="evidence" value="ECO:0007669"/>
    <property type="project" value="UniProtKB-UniRule"/>
</dbReference>
<dbReference type="GO" id="GO:0045948">
    <property type="term" value="P:positive regulation of translational initiation"/>
    <property type="evidence" value="ECO:0007669"/>
    <property type="project" value="UniProtKB-UniRule"/>
</dbReference>
<dbReference type="GO" id="GO:0006109">
    <property type="term" value="P:regulation of carbohydrate metabolic process"/>
    <property type="evidence" value="ECO:0007669"/>
    <property type="project" value="UniProtKB-UniRule"/>
</dbReference>
<dbReference type="FunFam" id="2.60.40.4380:FF:000001">
    <property type="entry name" value="Translational regulator CsrA"/>
    <property type="match status" value="1"/>
</dbReference>
<dbReference type="Gene3D" id="2.60.40.4380">
    <property type="entry name" value="Translational regulator CsrA"/>
    <property type="match status" value="1"/>
</dbReference>
<dbReference type="HAMAP" id="MF_00167">
    <property type="entry name" value="CsrA"/>
    <property type="match status" value="1"/>
</dbReference>
<dbReference type="InterPro" id="IPR003751">
    <property type="entry name" value="CsrA"/>
</dbReference>
<dbReference type="InterPro" id="IPR036107">
    <property type="entry name" value="CsrA_sf"/>
</dbReference>
<dbReference type="NCBIfam" id="TIGR00202">
    <property type="entry name" value="csrA"/>
    <property type="match status" value="1"/>
</dbReference>
<dbReference type="NCBIfam" id="NF002469">
    <property type="entry name" value="PRK01712.1"/>
    <property type="match status" value="1"/>
</dbReference>
<dbReference type="PANTHER" id="PTHR34984">
    <property type="entry name" value="CARBON STORAGE REGULATOR"/>
    <property type="match status" value="1"/>
</dbReference>
<dbReference type="PANTHER" id="PTHR34984:SF1">
    <property type="entry name" value="CARBON STORAGE REGULATOR"/>
    <property type="match status" value="1"/>
</dbReference>
<dbReference type="Pfam" id="PF02599">
    <property type="entry name" value="CsrA"/>
    <property type="match status" value="1"/>
</dbReference>
<dbReference type="SUPFAM" id="SSF117130">
    <property type="entry name" value="CsrA-like"/>
    <property type="match status" value="1"/>
</dbReference>
<sequence length="69" mass="7696">MLILTRRVGETLMIGDEVTVTVLGVKGNQVRIGVNAPKEVSVHREEIYQRIQAEKSADDLLIPKQRLVA</sequence>
<protein>
    <recommendedName>
        <fullName evidence="1">Translational regulator CsrA</fullName>
    </recommendedName>
    <alternativeName>
        <fullName evidence="1">Carbon storage regulator</fullName>
    </alternativeName>
    <alternativeName>
        <fullName evidence="3">Repressor of secondary metabolites</fullName>
    </alternativeName>
</protein>
<keyword id="KW-0010">Activator</keyword>
<keyword id="KW-0963">Cytoplasm</keyword>
<keyword id="KW-0678">Repressor</keyword>
<keyword id="KW-0694">RNA-binding</keyword>
<keyword id="KW-0810">Translation regulation</keyword>
<accession>O85735</accession>
<evidence type="ECO:0000255" key="1">
    <source>
        <dbReference type="HAMAP-Rule" id="MF_00167"/>
    </source>
</evidence>
<evidence type="ECO:0000269" key="2">
    <source>
    </source>
</evidence>
<evidence type="ECO:0000303" key="3">
    <source>
    </source>
</evidence>
<feature type="chain" id="PRO_0000177089" description="Translational regulator CsrA">
    <location>
        <begin position="1"/>
        <end position="69"/>
    </location>
</feature>
<comment type="function">
    <text evidence="1">A key translational regulator that binds mRNA to regulate translation initiation and/or mRNA stability. Mediates global changes in gene expression, shifting from rapid growth to stress survival by linking envelope stress, the stringent response and the catabolite repression systems. Usually binds in the 5'-UTR; binding at or near the Shine-Dalgarno sequence prevents ribosome-binding, repressing translation, binding elsewhere in the 5'-UTR can activate translation and/or stabilize the mRNA. Its function is antagonized by small RNA(s).</text>
</comment>
<comment type="function">
    <text evidence="2">Involved in the process of swarming and quorum-sensing signal production; overexpression strongly inhibits swarming motility, pigment and N-acylhomoserine lactone (quorum-sensing signal) production but not swimming motility or swarmer cell differentiation (PubMed:11287746).</text>
</comment>
<comment type="subunit">
    <text evidence="1">Homodimer; the beta-strands of each monomer intercalate to form a hydrophobic core, while the alpha-helices form wings that extend away from the core.</text>
</comment>
<comment type="subcellular location">
    <subcellularLocation>
        <location evidence="1">Cytoplasm</location>
    </subcellularLocation>
</comment>
<comment type="induction">
    <text evidence="2">Transcription peaks early in exponential phase, is greater at 37 than 30 degrees Celsius (PubMed:11287746).</text>
</comment>
<comment type="disruption phenotype">
    <text evidence="2">Swarming motility initiates later than in wild-type; once initiatated the swarming velocity is normal (PubMed:11287746).</text>
</comment>
<comment type="similarity">
    <text evidence="1">Belongs to the CsrA/RsmA family.</text>
</comment>